<protein>
    <recommendedName>
        <fullName evidence="7">Apolipoprotein A-Ia</fullName>
        <shortName evidence="7">Apo-AIa</shortName>
        <shortName evidence="7">ApoA-Ia</shortName>
    </recommendedName>
    <alternativeName>
        <fullName>Apolipoprotein A1</fullName>
    </alternativeName>
    <component>
        <recommendedName>
            <fullName>Proapolipoprotein A-I</fullName>
            <shortName>ProapoA-I</shortName>
        </recommendedName>
    </component>
</protein>
<organism evidence="8">
    <name type="scientific">Danio rerio</name>
    <name type="common">Zebrafish</name>
    <name type="synonym">Brachydanio rerio</name>
    <dbReference type="NCBI Taxonomy" id="7955"/>
    <lineage>
        <taxon>Eukaryota</taxon>
        <taxon>Metazoa</taxon>
        <taxon>Chordata</taxon>
        <taxon>Craniata</taxon>
        <taxon>Vertebrata</taxon>
        <taxon>Euteleostomi</taxon>
        <taxon>Actinopterygii</taxon>
        <taxon>Neopterygii</taxon>
        <taxon>Teleostei</taxon>
        <taxon>Ostariophysi</taxon>
        <taxon>Cypriniformes</taxon>
        <taxon>Danionidae</taxon>
        <taxon>Danioninae</taxon>
        <taxon>Danio</taxon>
    </lineage>
</organism>
<feature type="signal peptide" evidence="3">
    <location>
        <begin position="1"/>
        <end position="18"/>
    </location>
</feature>
<feature type="chain" id="PRO_0000425343" description="Proapolipoprotein A-I">
    <location>
        <begin position="19"/>
        <end position="262"/>
    </location>
</feature>
<feature type="chain" id="PRO_0000001964" description="Apolipoprotein A-Ia">
    <location>
        <begin position="24"/>
        <end position="262"/>
    </location>
</feature>
<feature type="repeat" description="1">
    <location>
        <begin position="64"/>
        <end position="85"/>
    </location>
</feature>
<feature type="repeat" description="2">
    <location>
        <begin position="87"/>
        <end position="107"/>
    </location>
</feature>
<feature type="repeat" description="3; half-length">
    <location>
        <begin position="108"/>
        <end position="118"/>
    </location>
</feature>
<feature type="repeat" description="4">
    <location>
        <begin position="119"/>
        <end position="140"/>
    </location>
</feature>
<feature type="repeat" description="5">
    <location>
        <begin position="141"/>
        <end position="162"/>
    </location>
</feature>
<feature type="repeat" description="6">
    <location>
        <begin position="163"/>
        <end position="184"/>
    </location>
</feature>
<feature type="repeat" description="7">
    <location>
        <begin position="185"/>
        <end position="206"/>
    </location>
</feature>
<feature type="repeat" description="8">
    <location>
        <begin position="207"/>
        <end position="228"/>
    </location>
</feature>
<feature type="repeat" description="9; half-length">
    <location>
        <begin position="229"/>
        <end position="239"/>
    </location>
</feature>
<feature type="repeat" description="10">
    <location>
        <begin position="240"/>
        <end position="262"/>
    </location>
</feature>
<feature type="region of interest" description="3 X approximate tandem repeats">
    <location>
        <begin position="32"/>
        <end position="63"/>
    </location>
</feature>
<feature type="region of interest" description="10 X approximate tandem repeats">
    <location>
        <begin position="64"/>
        <end position="262"/>
    </location>
</feature>
<feature type="sequence conflict" description="In Ref. 2; AAH83473." evidence="7" ref="2">
    <original>Q</original>
    <variation>L</variation>
    <location>
        <position position="65"/>
    </location>
</feature>
<accession>O42363</accession>
<accession>Q5XJ38</accession>
<dbReference type="EMBL" id="Y13653">
    <property type="protein sequence ID" value="CAA74004.1"/>
    <property type="molecule type" value="mRNA"/>
</dbReference>
<dbReference type="EMBL" id="BC083473">
    <property type="protein sequence ID" value="AAH83473.1"/>
    <property type="status" value="ALT_FRAME"/>
    <property type="molecule type" value="mRNA"/>
</dbReference>
<dbReference type="RefSeq" id="NP_571203.1">
    <property type="nucleotide sequence ID" value="NM_131128.1"/>
</dbReference>
<dbReference type="SMR" id="O42363"/>
<dbReference type="BioGRID" id="78555">
    <property type="interactions" value="1"/>
</dbReference>
<dbReference type="FunCoup" id="O42363">
    <property type="interactions" value="85"/>
</dbReference>
<dbReference type="STRING" id="7955.ENSDARP00000025613"/>
<dbReference type="PaxDb" id="7955-ENSDARP00000025613"/>
<dbReference type="PeptideAtlas" id="O42363"/>
<dbReference type="DNASU" id="30355"/>
<dbReference type="Ensembl" id="ENSDART00000012050">
    <property type="protein sequence ID" value="ENSDARP00000025613"/>
    <property type="gene ID" value="ENSDARG00000012076"/>
</dbReference>
<dbReference type="Ensembl" id="ENSDART00000187198">
    <property type="protein sequence ID" value="ENSDARP00000155136"/>
    <property type="gene ID" value="ENSDARG00000110395"/>
</dbReference>
<dbReference type="GeneID" id="30355"/>
<dbReference type="KEGG" id="dre:30355"/>
<dbReference type="AGR" id="ZFIN:ZDB-GENE-990415-14"/>
<dbReference type="CTD" id="30355"/>
<dbReference type="ZFIN" id="ZDB-GENE-990415-14">
    <property type="gene designation" value="apoa1a"/>
</dbReference>
<dbReference type="eggNOG" id="ENOG502S1XQ">
    <property type="taxonomic scope" value="Eukaryota"/>
</dbReference>
<dbReference type="HOGENOM" id="CLU_058447_0_0_1"/>
<dbReference type="InParanoid" id="O42363"/>
<dbReference type="OMA" id="QVHETAK"/>
<dbReference type="OrthoDB" id="8727817at2759"/>
<dbReference type="PhylomeDB" id="O42363"/>
<dbReference type="TreeFam" id="TF334458"/>
<dbReference type="Reactome" id="R-DRE-114608">
    <property type="pathway name" value="Platelet degranulation"/>
</dbReference>
<dbReference type="Reactome" id="R-DRE-3000471">
    <property type="pathway name" value="Scavenging by Class B Receptors"/>
</dbReference>
<dbReference type="Reactome" id="R-DRE-8963896">
    <property type="pathway name" value="HDL assembly"/>
</dbReference>
<dbReference type="Reactome" id="R-DRE-8964058">
    <property type="pathway name" value="HDL remodeling"/>
</dbReference>
<dbReference type="PRO" id="PR:O42363"/>
<dbReference type="Proteomes" id="UP000000437">
    <property type="component" value="Alternate scaffold 5"/>
</dbReference>
<dbReference type="Proteomes" id="UP000000437">
    <property type="component" value="Chromosome 5"/>
</dbReference>
<dbReference type="Bgee" id="ENSDARG00000012076">
    <property type="expression patterns" value="Expressed in intestine and 19 other cell types or tissues"/>
</dbReference>
<dbReference type="GO" id="GO:0042627">
    <property type="term" value="C:chylomicron"/>
    <property type="evidence" value="ECO:0000318"/>
    <property type="project" value="GO_Central"/>
</dbReference>
<dbReference type="GO" id="GO:0005576">
    <property type="term" value="C:extracellular region"/>
    <property type="evidence" value="ECO:0000314"/>
    <property type="project" value="ZFIN"/>
</dbReference>
<dbReference type="GO" id="GO:1903561">
    <property type="term" value="C:extracellular vesicle"/>
    <property type="evidence" value="ECO:0000318"/>
    <property type="project" value="GO_Central"/>
</dbReference>
<dbReference type="GO" id="GO:0034364">
    <property type="term" value="C:high-density lipoprotein particle"/>
    <property type="evidence" value="ECO:0000318"/>
    <property type="project" value="GO_Central"/>
</dbReference>
<dbReference type="GO" id="GO:0034362">
    <property type="term" value="C:low-density lipoprotein particle"/>
    <property type="evidence" value="ECO:0000318"/>
    <property type="project" value="GO_Central"/>
</dbReference>
<dbReference type="GO" id="GO:0034361">
    <property type="term" value="C:very-low-density lipoprotein particle"/>
    <property type="evidence" value="ECO:0000318"/>
    <property type="project" value="GO_Central"/>
</dbReference>
<dbReference type="GO" id="GO:0120020">
    <property type="term" value="F:cholesterol transfer activity"/>
    <property type="evidence" value="ECO:0000318"/>
    <property type="project" value="GO_Central"/>
</dbReference>
<dbReference type="GO" id="GO:0060228">
    <property type="term" value="F:phosphatidylcholine-sterol O-acyltransferase activator activity"/>
    <property type="evidence" value="ECO:0000318"/>
    <property type="project" value="GO_Central"/>
</dbReference>
<dbReference type="GO" id="GO:0005543">
    <property type="term" value="F:phospholipid binding"/>
    <property type="evidence" value="ECO:0000318"/>
    <property type="project" value="GO_Central"/>
</dbReference>
<dbReference type="GO" id="GO:0042803">
    <property type="term" value="F:protein homodimerization activity"/>
    <property type="evidence" value="ECO:0000250"/>
    <property type="project" value="UniProtKB"/>
</dbReference>
<dbReference type="GO" id="GO:0055090">
    <property type="term" value="P:acylglycerol homeostasis"/>
    <property type="evidence" value="ECO:0000318"/>
    <property type="project" value="GO_Central"/>
</dbReference>
<dbReference type="GO" id="GO:0033344">
    <property type="term" value="P:cholesterol efflux"/>
    <property type="evidence" value="ECO:0000318"/>
    <property type="project" value="GO_Central"/>
</dbReference>
<dbReference type="GO" id="GO:0008203">
    <property type="term" value="P:cholesterol metabolic process"/>
    <property type="evidence" value="ECO:0000318"/>
    <property type="project" value="GO_Central"/>
</dbReference>
<dbReference type="GO" id="GO:0042157">
    <property type="term" value="P:lipoprotein metabolic process"/>
    <property type="evidence" value="ECO:0007669"/>
    <property type="project" value="InterPro"/>
</dbReference>
<dbReference type="GO" id="GO:0033700">
    <property type="term" value="P:phospholipid efflux"/>
    <property type="evidence" value="ECO:0000318"/>
    <property type="project" value="GO_Central"/>
</dbReference>
<dbReference type="FunFam" id="1.20.120.20:FF:000007">
    <property type="entry name" value="Apolipoprotein A-IV a"/>
    <property type="match status" value="1"/>
</dbReference>
<dbReference type="Gene3D" id="1.20.5.20">
    <property type="match status" value="1"/>
</dbReference>
<dbReference type="Gene3D" id="6.10.250.2890">
    <property type="match status" value="1"/>
</dbReference>
<dbReference type="Gene3D" id="1.20.120.20">
    <property type="entry name" value="Apolipoprotein"/>
    <property type="match status" value="1"/>
</dbReference>
<dbReference type="InterPro" id="IPR000074">
    <property type="entry name" value="ApoA_E"/>
</dbReference>
<dbReference type="InterPro" id="IPR050163">
    <property type="entry name" value="Apolipoprotein_A1/A4/E"/>
</dbReference>
<dbReference type="PANTHER" id="PTHR18976">
    <property type="entry name" value="APOLIPOPROTEIN"/>
    <property type="match status" value="1"/>
</dbReference>
<dbReference type="PANTHER" id="PTHR18976:SF11">
    <property type="entry name" value="APOLIPOPROTEIN A-I"/>
    <property type="match status" value="1"/>
</dbReference>
<dbReference type="Pfam" id="PF01442">
    <property type="entry name" value="Apolipoprotein"/>
    <property type="match status" value="1"/>
</dbReference>
<dbReference type="SUPFAM" id="SSF58113">
    <property type="entry name" value="Apolipoprotein A-I"/>
    <property type="match status" value="1"/>
</dbReference>
<evidence type="ECO:0000250" key="1">
    <source>
        <dbReference type="UniProtKB" id="G5BQH5"/>
    </source>
</evidence>
<evidence type="ECO:0000250" key="2">
    <source>
        <dbReference type="UniProtKB" id="P02647"/>
    </source>
</evidence>
<evidence type="ECO:0000255" key="3"/>
<evidence type="ECO:0000269" key="4">
    <source>
    </source>
</evidence>
<evidence type="ECO:0000269" key="5">
    <source>
    </source>
</evidence>
<evidence type="ECO:0000269" key="6">
    <source>
    </source>
</evidence>
<evidence type="ECO:0000305" key="7"/>
<evidence type="ECO:0000312" key="8">
    <source>
        <dbReference type="Proteomes" id="UP000000437"/>
    </source>
</evidence>
<reference key="1">
    <citation type="journal article" date="1997" name="Proc. Natl. Acad. Sci. U.S.A.">
        <title>Both apolipoprotein E and A-I genes are present in a nonmammalian vertebrate and are highly expressed during embryonic development.</title>
        <authorList>
            <person name="Babin P.J."/>
            <person name="Thisse C."/>
            <person name="Durliat M."/>
            <person name="Andre M."/>
            <person name="Akimenko M.-A."/>
            <person name="Thisse B."/>
        </authorList>
    </citation>
    <scope>NUCLEOTIDE SEQUENCE [MRNA]</scope>
    <scope>DEVELOPMENTAL STAGE</scope>
    <source>
        <tissue>Embryo</tissue>
    </source>
</reference>
<reference key="2">
    <citation type="submission" date="2004-10" db="EMBL/GenBank/DDBJ databases">
        <authorList>
            <consortium name="NIH - Zebrafish Gene Collection (ZGC) project"/>
        </authorList>
    </citation>
    <scope>NUCLEOTIDE SEQUENCE [LARGE SCALE MRNA]</scope>
    <source>
        <tissue>Liver</tissue>
    </source>
</reference>
<reference key="3">
    <citation type="journal article" date="2013" name="Nature">
        <title>Control of angiogenesis by AIBP-mediated cholesterol efflux.</title>
        <authorList>
            <person name="Fang L."/>
            <person name="Choi S.H."/>
            <person name="Baek J.S."/>
            <person name="Liu C."/>
            <person name="Almazan F."/>
            <person name="Ulrich F."/>
            <person name="Wiesner P."/>
            <person name="Taleb A."/>
            <person name="Deer E."/>
            <person name="Pattison J."/>
            <person name="Torres-Vazquez J."/>
            <person name="Li A.C."/>
            <person name="Miller Y.I."/>
        </authorList>
    </citation>
    <scope>INTERACTION WITH NAXE AND YJEFN3</scope>
</reference>
<reference key="4">
    <citation type="journal article" date="2018" name="Nat. Commun.">
        <title>Deficiency in class III PI3-kinase confers postnatal lethality with IBD-like features in zebrafish.</title>
        <authorList>
            <person name="Zhao S."/>
            <person name="Xia J."/>
            <person name="Wu X."/>
            <person name="Zhang L."/>
            <person name="Wang P."/>
            <person name="Wang H."/>
            <person name="Li H."/>
            <person name="Wang X."/>
            <person name="Chen Y."/>
            <person name="Agnetti J."/>
            <person name="Li Y."/>
            <person name="Pei D."/>
            <person name="Shu X."/>
        </authorList>
    </citation>
    <scope>DEVELOPMENTAL STAGE</scope>
</reference>
<gene>
    <name evidence="7" type="primary">apoa1a</name>
    <name type="synonym">apoa</name>
    <name evidence="7" type="synonym">apoa1</name>
    <name type="ORF">zgc:103718</name>
</gene>
<proteinExistence type="evidence at protein level"/>
<comment type="function">
    <text evidence="2">Participates in the reverse transport of cholesterol from tissues to the liver for excretion by promoting cholesterol efflux from tissues and by acting as a cofactor for the lecithin cholesterol acyltransferase (LCAT).</text>
</comment>
<comment type="subunit">
    <text evidence="1 4">Homodimer (By similarity). Interacts with naxe and yjefn3 (PubMed:23719382).</text>
</comment>
<comment type="subcellular location">
    <subcellularLocation>
        <location>Secreted</location>
    </subcellularLocation>
</comment>
<comment type="developmental stage">
    <text evidence="5 6">Highly expressed in the yolk syncytial layer during embryonic (starting at the gastrula stage) and early larval development, an extraembryonic structure implicated in embryonic and larval nutrition (PubMed:9238027). Expressed in the embryo at 6 dpf to 8 dpf (PubMed:29980668).</text>
</comment>
<comment type="similarity">
    <text evidence="7">Belongs to the apolipoprotein A1/A4/E family.</text>
</comment>
<comment type="sequence caution" evidence="7">
    <conflict type="frameshift">
        <sequence resource="EMBL-CDS" id="AAH83473"/>
    </conflict>
</comment>
<sequence>MKFVALALTLLLALGSQANLFQADAPTQLEHYKAAALVYLNQVKDQAEKALDNLDGTDYEQYKLQLSESLTKLQEYAQTTSQALTPYAETISTQLMENTKQLRERVMTDVEDLRSKLEPHRAELYTALQKHIDEYREKLEPVFQEYSALNRQNAEQLRAKLEPLMDDIRKAFESNIEETKSKVVPMVEAVRTKLTERLEDLRTMAAPYAEEYKEQLVKAVEEAREKIAPHTQDLQTRMEPYMENVRTTFAQMYETIAKAIQA</sequence>
<name>APOA1_DANRE</name>
<keyword id="KW-0153">Cholesterol metabolism</keyword>
<keyword id="KW-0345">HDL</keyword>
<keyword id="KW-0443">Lipid metabolism</keyword>
<keyword id="KW-0445">Lipid transport</keyword>
<keyword id="KW-1185">Reference proteome</keyword>
<keyword id="KW-0677">Repeat</keyword>
<keyword id="KW-0964">Secreted</keyword>
<keyword id="KW-0732">Signal</keyword>
<keyword id="KW-0753">Steroid metabolism</keyword>
<keyword id="KW-1207">Sterol metabolism</keyword>
<keyword id="KW-0813">Transport</keyword>